<sequence>MFRSITQRVIRNNCYKQSTKSITSSTSFINNSLSYTTTSNENDIKDKNEEHDHRAKGKGRELLLSFDKSGLAQFPKQVFKNRKYPITDFEKYLQDITKVRGPMSIDTFIKEVLTNPKYGYYMNKDVFGKGGDFITAPEVSQLFGEMIGIWCVATWEAMGKPKKLQIVEMGPGRGTLMKDILRSTKVFKEFYDSISVHLVEASPANKKTQKQNLLYFKDKAINFDHKTIGETPNGIKVTWVGKLEEVPTDIPTLFLAQEFFDALPIHVFRFSREKNDWCEVLVDEDITEHGEYYLRFVQSKGPTLMTTAVKHLLPEFGLDGYQVELGLAGLAISQQIANRIDKSGGAALIIDYGYDKIVKSSLQAIRDHEFVDILDKPGTADLSVWVDFQTIRKTVKLLKNKSTAIGPVDQGIFLKEMGIEHRLAQIGRKLDSNEKFEELVMGYKKLVDPKEMGTNYKVITICDKNITPIGFSTSKTYDDEDLMI</sequence>
<feature type="transit peptide" description="Mitochondrion" evidence="2">
    <location>
        <begin position="1"/>
        <end position="12"/>
    </location>
</feature>
<feature type="chain" id="PRO_0000356854" description="Protein arginine methyltransferase NDUFAF7 homolog, mitochondrial">
    <location>
        <begin position="13"/>
        <end position="484"/>
    </location>
</feature>
<feature type="mutagenesis site" description="Fails to complement the null phenotype." evidence="4">
    <original>G</original>
    <variation>V</variation>
    <location>
        <position position="170"/>
    </location>
</feature>
<feature type="helix" evidence="7">
    <location>
        <begin position="88"/>
        <end position="100"/>
    </location>
</feature>
<feature type="strand" evidence="7">
    <location>
        <begin position="102"/>
        <end position="104"/>
    </location>
</feature>
<feature type="helix" evidence="7">
    <location>
        <begin position="105"/>
        <end position="114"/>
    </location>
</feature>
<feature type="turn" evidence="7">
    <location>
        <begin position="116"/>
        <end position="118"/>
    </location>
</feature>
<feature type="turn" evidence="7">
    <location>
        <begin position="120"/>
        <end position="122"/>
    </location>
</feature>
<feature type="strand" evidence="7">
    <location>
        <begin position="123"/>
        <end position="125"/>
    </location>
</feature>
<feature type="strand" evidence="7">
    <location>
        <begin position="127"/>
        <end position="129"/>
    </location>
</feature>
<feature type="helix" evidence="7">
    <location>
        <begin position="136"/>
        <end position="139"/>
    </location>
</feature>
<feature type="helix" evidence="7">
    <location>
        <begin position="141"/>
        <end position="158"/>
    </location>
</feature>
<feature type="strand" evidence="7">
    <location>
        <begin position="162"/>
        <end position="170"/>
    </location>
</feature>
<feature type="helix" evidence="7">
    <location>
        <begin position="175"/>
        <end position="183"/>
    </location>
</feature>
<feature type="turn" evidence="7">
    <location>
        <begin position="184"/>
        <end position="186"/>
    </location>
</feature>
<feature type="helix" evidence="7">
    <location>
        <begin position="188"/>
        <end position="193"/>
    </location>
</feature>
<feature type="strand" evidence="7">
    <location>
        <begin position="194"/>
        <end position="199"/>
    </location>
</feature>
<feature type="helix" evidence="7">
    <location>
        <begin position="203"/>
        <end position="211"/>
    </location>
</feature>
<feature type="strand" evidence="7">
    <location>
        <begin position="217"/>
        <end position="219"/>
    </location>
</feature>
<feature type="turn" evidence="7">
    <location>
        <begin position="223"/>
        <end position="225"/>
    </location>
</feature>
<feature type="strand" evidence="7">
    <location>
        <begin position="228"/>
        <end position="230"/>
    </location>
</feature>
<feature type="strand" evidence="7">
    <location>
        <begin position="236"/>
        <end position="242"/>
    </location>
</feature>
<feature type="helix" evidence="7">
    <location>
        <begin position="243"/>
        <end position="245"/>
    </location>
</feature>
<feature type="strand" evidence="7">
    <location>
        <begin position="248"/>
        <end position="250"/>
    </location>
</feature>
<feature type="strand" evidence="7">
    <location>
        <begin position="252"/>
        <end position="258"/>
    </location>
</feature>
<feature type="helix" evidence="7">
    <location>
        <begin position="260"/>
        <end position="262"/>
    </location>
</feature>
<feature type="strand" evidence="7">
    <location>
        <begin position="266"/>
        <end position="271"/>
    </location>
</feature>
<feature type="turn" evidence="7">
    <location>
        <begin position="272"/>
        <end position="275"/>
    </location>
</feature>
<feature type="strand" evidence="7">
    <location>
        <begin position="276"/>
        <end position="284"/>
    </location>
</feature>
<feature type="strand" evidence="7">
    <location>
        <begin position="291"/>
        <end position="298"/>
    </location>
</feature>
<feature type="helix" evidence="7">
    <location>
        <begin position="304"/>
        <end position="308"/>
    </location>
</feature>
<feature type="turn" evidence="7">
    <location>
        <begin position="309"/>
        <end position="312"/>
    </location>
</feature>
<feature type="strand" evidence="7">
    <location>
        <begin position="322"/>
        <end position="325"/>
    </location>
</feature>
<feature type="helix" evidence="7">
    <location>
        <begin position="327"/>
        <end position="343"/>
    </location>
</feature>
<feature type="strand" evidence="7">
    <location>
        <begin position="345"/>
        <end position="356"/>
    </location>
</feature>
<feature type="strand" evidence="7">
    <location>
        <begin position="358"/>
        <end position="360"/>
    </location>
</feature>
<feature type="strand" evidence="7">
    <location>
        <begin position="363"/>
        <end position="366"/>
    </location>
</feature>
<feature type="strand" evidence="7">
    <location>
        <begin position="369"/>
        <end position="371"/>
    </location>
</feature>
<feature type="strand" evidence="7">
    <location>
        <begin position="379"/>
        <end position="383"/>
    </location>
</feature>
<feature type="helix" evidence="7">
    <location>
        <begin position="388"/>
        <end position="396"/>
    </location>
</feature>
<feature type="strand" evidence="7">
    <location>
        <begin position="400"/>
        <end position="409"/>
    </location>
</feature>
<feature type="helix" evidence="7">
    <location>
        <begin position="410"/>
        <end position="416"/>
    </location>
</feature>
<feature type="helix" evidence="7">
    <location>
        <begin position="419"/>
        <end position="430"/>
    </location>
</feature>
<feature type="helix" evidence="7">
    <location>
        <begin position="433"/>
        <end position="447"/>
    </location>
</feature>
<feature type="turn" evidence="7">
    <location>
        <begin position="449"/>
        <end position="451"/>
    </location>
</feature>
<feature type="helix" evidence="7">
    <location>
        <begin position="452"/>
        <end position="455"/>
    </location>
</feature>
<feature type="strand" evidence="7">
    <location>
        <begin position="456"/>
        <end position="463"/>
    </location>
</feature>
<feature type="turn" evidence="7">
    <location>
        <begin position="478"/>
        <end position="480"/>
    </location>
</feature>
<reference key="1">
    <citation type="journal article" date="2005" name="Nature">
        <title>The genome of the social amoeba Dictyostelium discoideum.</title>
        <authorList>
            <person name="Eichinger L."/>
            <person name="Pachebat J.A."/>
            <person name="Gloeckner G."/>
            <person name="Rajandream M.A."/>
            <person name="Sucgang R."/>
            <person name="Berriman M."/>
            <person name="Song J."/>
            <person name="Olsen R."/>
            <person name="Szafranski K."/>
            <person name="Xu Q."/>
            <person name="Tunggal B."/>
            <person name="Kummerfeld S."/>
            <person name="Madera M."/>
            <person name="Konfortov B.A."/>
            <person name="Rivero F."/>
            <person name="Bankier A.T."/>
            <person name="Lehmann R."/>
            <person name="Hamlin N."/>
            <person name="Davies R."/>
            <person name="Gaudet P."/>
            <person name="Fey P."/>
            <person name="Pilcher K."/>
            <person name="Chen G."/>
            <person name="Saunders D."/>
            <person name="Sodergren E.J."/>
            <person name="Davis P."/>
            <person name="Kerhornou A."/>
            <person name="Nie X."/>
            <person name="Hall N."/>
            <person name="Anjard C."/>
            <person name="Hemphill L."/>
            <person name="Bason N."/>
            <person name="Farbrother P."/>
            <person name="Desany B."/>
            <person name="Just E."/>
            <person name="Morio T."/>
            <person name="Rost R."/>
            <person name="Churcher C.M."/>
            <person name="Cooper J."/>
            <person name="Haydock S."/>
            <person name="van Driessche N."/>
            <person name="Cronin A."/>
            <person name="Goodhead I."/>
            <person name="Muzny D.M."/>
            <person name="Mourier T."/>
            <person name="Pain A."/>
            <person name="Lu M."/>
            <person name="Harper D."/>
            <person name="Lindsay R."/>
            <person name="Hauser H."/>
            <person name="James K.D."/>
            <person name="Quiles M."/>
            <person name="Madan Babu M."/>
            <person name="Saito T."/>
            <person name="Buchrieser C."/>
            <person name="Wardroper A."/>
            <person name="Felder M."/>
            <person name="Thangavelu M."/>
            <person name="Johnson D."/>
            <person name="Knights A."/>
            <person name="Loulseged H."/>
            <person name="Mungall K.L."/>
            <person name="Oliver K."/>
            <person name="Price C."/>
            <person name="Quail M.A."/>
            <person name="Urushihara H."/>
            <person name="Hernandez J."/>
            <person name="Rabbinowitsch E."/>
            <person name="Steffen D."/>
            <person name="Sanders M."/>
            <person name="Ma J."/>
            <person name="Kohara Y."/>
            <person name="Sharp S."/>
            <person name="Simmonds M.N."/>
            <person name="Spiegler S."/>
            <person name="Tivey A."/>
            <person name="Sugano S."/>
            <person name="White B."/>
            <person name="Walker D."/>
            <person name="Woodward J.R."/>
            <person name="Winckler T."/>
            <person name="Tanaka Y."/>
            <person name="Shaulsky G."/>
            <person name="Schleicher M."/>
            <person name="Weinstock G.M."/>
            <person name="Rosenthal A."/>
            <person name="Cox E.C."/>
            <person name="Chisholm R.L."/>
            <person name="Gibbs R.A."/>
            <person name="Loomis W.F."/>
            <person name="Platzer M."/>
            <person name="Kay R.R."/>
            <person name="Williams J.G."/>
            <person name="Dear P.H."/>
            <person name="Noegel A.A."/>
            <person name="Barrell B.G."/>
            <person name="Kuspa A."/>
        </authorList>
    </citation>
    <scope>NUCLEOTIDE SEQUENCE [LARGE SCALE GENOMIC DNA]</scope>
    <source>
        <strain>AX4</strain>
    </source>
</reference>
<reference key="2">
    <citation type="journal article" date="2006" name="J. Cell Sci.">
        <title>Functional genomics in Dictyostelium: midA, a new conserved protein, is required for mitochondrial function and development.</title>
        <authorList>
            <person name="Torija P."/>
            <person name="Vicente J.J."/>
            <person name="Rodrigues T.B."/>
            <person name="Robles A."/>
            <person name="Cerdan S."/>
            <person name="Sastre L."/>
            <person name="Calvo R.M."/>
            <person name="Escalante R."/>
        </authorList>
    </citation>
    <scope>FUNCTION</scope>
    <scope>SUBCELLULAR LOCATION</scope>
    <scope>DEVELOPMENTAL STAGE</scope>
    <scope>DISRUPTION PHENOTYPE</scope>
</reference>
<reference key="3">
    <citation type="journal article" date="2010" name="J. Cell Sci.">
        <title>MidA is a putative methyltransferase that is required for mitochondrial complex I function.</title>
        <authorList>
            <person name="Carilla-Latorre S."/>
            <person name="Gallardo M.E."/>
            <person name="Annesley S.J."/>
            <person name="Calvo-Garrido J."/>
            <person name="Grana O."/>
            <person name="Accari S.L."/>
            <person name="Smith P.K."/>
            <person name="Valencia A."/>
            <person name="Garesse R."/>
            <person name="Fisher P.R."/>
            <person name="Escalante R."/>
        </authorList>
    </citation>
    <scope>FUNCTION</scope>
    <scope>INTERACTION WITH NDUFS2</scope>
    <scope>SUBUNIT</scope>
    <scope>MUTAGENESIS OF GLY-170</scope>
</reference>
<gene>
    <name evidence="5" type="primary">midA</name>
    <name type="ORF">DDB_G0282615</name>
</gene>
<organism>
    <name type="scientific">Dictyostelium discoideum</name>
    <name type="common">Social amoeba</name>
    <dbReference type="NCBI Taxonomy" id="44689"/>
    <lineage>
        <taxon>Eukaryota</taxon>
        <taxon>Amoebozoa</taxon>
        <taxon>Evosea</taxon>
        <taxon>Eumycetozoa</taxon>
        <taxon>Dictyostelia</taxon>
        <taxon>Dictyosteliales</taxon>
        <taxon>Dictyosteliaceae</taxon>
        <taxon>Dictyostelium</taxon>
    </lineage>
</organism>
<name>NDUF7_DICDI</name>
<evidence type="ECO:0000250" key="1">
    <source>
        <dbReference type="UniProtKB" id="Q7L592"/>
    </source>
</evidence>
<evidence type="ECO:0000255" key="2"/>
<evidence type="ECO:0000269" key="3">
    <source>
    </source>
</evidence>
<evidence type="ECO:0000269" key="4">
    <source>
    </source>
</evidence>
<evidence type="ECO:0000303" key="5">
    <source>
    </source>
</evidence>
<evidence type="ECO:0000305" key="6"/>
<evidence type="ECO:0007829" key="7">
    <source>
        <dbReference type="PDB" id="5ZZW"/>
    </source>
</evidence>
<protein>
    <recommendedName>
        <fullName evidence="1">Protein arginine methyltransferase NDUFAF7 homolog, mitochondrial</fullName>
        <ecNumber evidence="1">2.1.1.320</ecNumber>
    </recommendedName>
    <alternativeName>
        <fullName evidence="5">Mitochondrial dysfunction gene A</fullName>
    </alternativeName>
    <alternativeName>
        <fullName>NADH dehydrogenase [ubiquinone] complex I, assembly factor 7 homolog</fullName>
    </alternativeName>
</protein>
<keyword id="KW-0002">3D-structure</keyword>
<keyword id="KW-0489">Methyltransferase</keyword>
<keyword id="KW-0496">Mitochondrion</keyword>
<keyword id="KW-1185">Reference proteome</keyword>
<keyword id="KW-0808">Transferase</keyword>
<keyword id="KW-0809">Transit peptide</keyword>
<proteinExistence type="evidence at protein level"/>
<comment type="function">
    <text evidence="1 3 4">Involved in the assembly or stability of mitochondrial NADH:ubiquinone oxidoreductase complex (complex I) (PubMed:16507593, PubMed:20406883). Acts as an arginine methyltransferase and probably acts by mediating arginine methylation of ndufs2 (By similarity).</text>
</comment>
<comment type="catalytic activity">
    <reaction evidence="1">
        <text>L-arginyl-[protein] + 2 S-adenosyl-L-methionine = N(omega),N(omega)'-dimethyl-L-arginyl-[protein] + 2 S-adenosyl-L-homocysteine + 2 H(+)</text>
        <dbReference type="Rhea" id="RHEA:48108"/>
        <dbReference type="Rhea" id="RHEA-COMP:10532"/>
        <dbReference type="Rhea" id="RHEA-COMP:11992"/>
        <dbReference type="ChEBI" id="CHEBI:15378"/>
        <dbReference type="ChEBI" id="CHEBI:29965"/>
        <dbReference type="ChEBI" id="CHEBI:57856"/>
        <dbReference type="ChEBI" id="CHEBI:59789"/>
        <dbReference type="ChEBI" id="CHEBI:88221"/>
        <dbReference type="EC" id="2.1.1.320"/>
    </reaction>
</comment>
<comment type="subunit">
    <text evidence="4">Homodimer (PubMed:20406883). Interacts with ndufs2 (PubMed:20406883).</text>
</comment>
<comment type="subcellular location">
    <subcellularLocation>
        <location evidence="3">Mitochondrion</location>
    </subcellularLocation>
</comment>
<comment type="developmental stage">
    <text evidence="3">High level of expression at the vegetative stage and the first hours of development.</text>
</comment>
<comment type="disruption phenotype">
    <text evidence="3">Cells show pleiotropic defects. Cell size, growth rate, phagocytosis and macropinocytosis are affected. During development, cells show an enhanced tendency to remain at the slug stage, and spore viability are compromised.</text>
</comment>
<comment type="similarity">
    <text evidence="6">Belongs to the NDUFAF7 family.</text>
</comment>
<dbReference type="EC" id="2.1.1.320" evidence="1"/>
<dbReference type="EMBL" id="AAFI02000047">
    <property type="protein sequence ID" value="EAL66167.1"/>
    <property type="molecule type" value="Genomic_DNA"/>
</dbReference>
<dbReference type="RefSeq" id="XP_640156.1">
    <property type="nucleotide sequence ID" value="XM_635064.1"/>
</dbReference>
<dbReference type="PDB" id="5ZTZ">
    <property type="method" value="X-ray"/>
    <property type="resolution" value="2.80 A"/>
    <property type="chains" value="A/B/C=76-484"/>
</dbReference>
<dbReference type="PDB" id="5ZU0">
    <property type="method" value="X-ray"/>
    <property type="resolution" value="2.76 A"/>
    <property type="chains" value="A/B/C=76-484"/>
</dbReference>
<dbReference type="PDB" id="5ZZW">
    <property type="method" value="X-ray"/>
    <property type="resolution" value="2.60 A"/>
    <property type="chains" value="A/B/C=76-484"/>
</dbReference>
<dbReference type="PDBsum" id="5ZTZ"/>
<dbReference type="PDBsum" id="5ZU0"/>
<dbReference type="PDBsum" id="5ZZW"/>
<dbReference type="SMR" id="Q54S83"/>
<dbReference type="FunCoup" id="Q54S83">
    <property type="interactions" value="567"/>
</dbReference>
<dbReference type="STRING" id="44689.Q54S83"/>
<dbReference type="PaxDb" id="44689-DDB0232140"/>
<dbReference type="EnsemblProtists" id="EAL66167">
    <property type="protein sequence ID" value="EAL66167"/>
    <property type="gene ID" value="DDB_G0282615"/>
</dbReference>
<dbReference type="GeneID" id="8623694"/>
<dbReference type="KEGG" id="ddi:DDB_G0282615"/>
<dbReference type="dictyBase" id="DDB_G0282615">
    <property type="gene designation" value="midA"/>
</dbReference>
<dbReference type="VEuPathDB" id="AmoebaDB:DDB_G0282615"/>
<dbReference type="eggNOG" id="KOG2901">
    <property type="taxonomic scope" value="Eukaryota"/>
</dbReference>
<dbReference type="HOGENOM" id="CLU_024840_3_2_1"/>
<dbReference type="InParanoid" id="Q54S83"/>
<dbReference type="OMA" id="YYHPQRN"/>
<dbReference type="PhylomeDB" id="Q54S83"/>
<dbReference type="Reactome" id="R-DDI-6799198">
    <property type="pathway name" value="Complex I biogenesis"/>
</dbReference>
<dbReference type="PRO" id="PR:Q54S83"/>
<dbReference type="Proteomes" id="UP000002195">
    <property type="component" value="Chromosome 3"/>
</dbReference>
<dbReference type="GO" id="GO:0005739">
    <property type="term" value="C:mitochondrion"/>
    <property type="evidence" value="ECO:0000314"/>
    <property type="project" value="dictyBase"/>
</dbReference>
<dbReference type="GO" id="GO:0035243">
    <property type="term" value="F:protein-arginine omega-N symmetric methyltransferase activity"/>
    <property type="evidence" value="ECO:0000318"/>
    <property type="project" value="GO_Central"/>
</dbReference>
<dbReference type="GO" id="GO:0046034">
    <property type="term" value="P:ATP metabolic process"/>
    <property type="evidence" value="ECO:0000315"/>
    <property type="project" value="dictyBase"/>
</dbReference>
<dbReference type="GO" id="GO:0031154">
    <property type="term" value="P:culmination involved in sorocarp development"/>
    <property type="evidence" value="ECO:0000315"/>
    <property type="project" value="dictyBase"/>
</dbReference>
<dbReference type="GO" id="GO:0006536">
    <property type="term" value="P:glutamate metabolic process"/>
    <property type="evidence" value="ECO:0000315"/>
    <property type="project" value="dictyBase"/>
</dbReference>
<dbReference type="GO" id="GO:0005977">
    <property type="term" value="P:glycogen metabolic process"/>
    <property type="evidence" value="ECO:0000315"/>
    <property type="project" value="dictyBase"/>
</dbReference>
<dbReference type="GO" id="GO:0032259">
    <property type="term" value="P:methylation"/>
    <property type="evidence" value="ECO:0007669"/>
    <property type="project" value="UniProtKB-KW"/>
</dbReference>
<dbReference type="GO" id="GO:0032981">
    <property type="term" value="P:mitochondrial respiratory chain complex I assembly"/>
    <property type="evidence" value="ECO:0000315"/>
    <property type="project" value="dictyBase"/>
</dbReference>
<dbReference type="GO" id="GO:0010507">
    <property type="term" value="P:negative regulation of autophagy"/>
    <property type="evidence" value="ECO:0000315"/>
    <property type="project" value="dictyBase"/>
</dbReference>
<dbReference type="GO" id="GO:0006909">
    <property type="term" value="P:phagocytosis"/>
    <property type="evidence" value="ECO:0000315"/>
    <property type="project" value="dictyBase"/>
</dbReference>
<dbReference type="GO" id="GO:0042331">
    <property type="term" value="P:phototaxis"/>
    <property type="evidence" value="ECO:0000315"/>
    <property type="project" value="dictyBase"/>
</dbReference>
<dbReference type="GO" id="GO:0006907">
    <property type="term" value="P:pinocytosis"/>
    <property type="evidence" value="ECO:0000315"/>
    <property type="project" value="dictyBase"/>
</dbReference>
<dbReference type="GO" id="GO:0090141">
    <property type="term" value="P:positive regulation of mitochondrial fission"/>
    <property type="evidence" value="ECO:0000315"/>
    <property type="project" value="dictyBase"/>
</dbReference>
<dbReference type="GO" id="GO:0030435">
    <property type="term" value="P:sporulation resulting in formation of a cellular spore"/>
    <property type="evidence" value="ECO:0000315"/>
    <property type="project" value="dictyBase"/>
</dbReference>
<dbReference type="GO" id="GO:0043052">
    <property type="term" value="P:thermotaxis"/>
    <property type="evidence" value="ECO:0000315"/>
    <property type="project" value="dictyBase"/>
</dbReference>
<dbReference type="FunFam" id="3.40.50.12710:FF:000004">
    <property type="entry name" value="Protein arginine methyltransferase NDUFAF7"/>
    <property type="match status" value="1"/>
</dbReference>
<dbReference type="Gene3D" id="3.40.50.12710">
    <property type="match status" value="1"/>
</dbReference>
<dbReference type="InterPro" id="IPR003788">
    <property type="entry name" value="NDUFAF7"/>
</dbReference>
<dbReference type="InterPro" id="IPR038375">
    <property type="entry name" value="NDUFAF7_sf"/>
</dbReference>
<dbReference type="InterPro" id="IPR029063">
    <property type="entry name" value="SAM-dependent_MTases_sf"/>
</dbReference>
<dbReference type="PANTHER" id="PTHR12049">
    <property type="entry name" value="PROTEIN ARGININE METHYLTRANSFERASE NDUFAF7, MITOCHONDRIAL"/>
    <property type="match status" value="1"/>
</dbReference>
<dbReference type="PANTHER" id="PTHR12049:SF7">
    <property type="entry name" value="PROTEIN ARGININE METHYLTRANSFERASE NDUFAF7, MITOCHONDRIAL"/>
    <property type="match status" value="1"/>
</dbReference>
<dbReference type="Pfam" id="PF02636">
    <property type="entry name" value="Methyltransf_28"/>
    <property type="match status" value="1"/>
</dbReference>
<dbReference type="SUPFAM" id="SSF53335">
    <property type="entry name" value="S-adenosyl-L-methionine-dependent methyltransferases"/>
    <property type="match status" value="1"/>
</dbReference>
<accession>Q54S83</accession>